<proteinExistence type="inferred from homology"/>
<comment type="function">
    <text evidence="1">One of the primary rRNA binding proteins. Required for association of the 30S and 50S subunits to form the 70S ribosome, for tRNA binding and peptide bond formation. It has been suggested to have peptidyltransferase activity; this is somewhat controversial. Makes several contacts with the 16S rRNA in the 70S ribosome.</text>
</comment>
<comment type="subunit">
    <text evidence="1">Part of the 50S ribosomal subunit. Forms a bridge to the 30S subunit in the 70S ribosome.</text>
</comment>
<comment type="similarity">
    <text evidence="1">Belongs to the universal ribosomal protein uL2 family.</text>
</comment>
<protein>
    <recommendedName>
        <fullName evidence="1">Large ribosomal subunit protein uL2</fullName>
    </recommendedName>
    <alternativeName>
        <fullName evidence="3">50S ribosomal protein L2</fullName>
    </alternativeName>
</protein>
<accession>A7H653</accession>
<reference key="1">
    <citation type="submission" date="2007-07" db="EMBL/GenBank/DDBJ databases">
        <title>Complete genome sequence of Campylobacter jejuni subsp doylei 269.97 isolated from human blood.</title>
        <authorList>
            <person name="Fouts D.E."/>
            <person name="Mongodin E.F."/>
            <person name="Puiu D."/>
            <person name="Sebastian Y."/>
            <person name="Miller W.G."/>
            <person name="Mandrell R.E."/>
            <person name="Lastovica A.J."/>
            <person name="Nelson K.E."/>
        </authorList>
    </citation>
    <scope>NUCLEOTIDE SEQUENCE [LARGE SCALE GENOMIC DNA]</scope>
    <source>
        <strain>ATCC BAA-1458 / RM4099 / 269.97</strain>
    </source>
</reference>
<gene>
    <name evidence="1" type="primary">rplB</name>
    <name type="ordered locus">JJD26997_2078</name>
</gene>
<organism>
    <name type="scientific">Campylobacter jejuni subsp. doylei (strain ATCC BAA-1458 / RM4099 / 269.97)</name>
    <dbReference type="NCBI Taxonomy" id="360109"/>
    <lineage>
        <taxon>Bacteria</taxon>
        <taxon>Pseudomonadati</taxon>
        <taxon>Campylobacterota</taxon>
        <taxon>Epsilonproteobacteria</taxon>
        <taxon>Campylobacterales</taxon>
        <taxon>Campylobacteraceae</taxon>
        <taxon>Campylobacter</taxon>
    </lineage>
</organism>
<dbReference type="EMBL" id="CP000768">
    <property type="protein sequence ID" value="ABS43756.1"/>
    <property type="molecule type" value="Genomic_DNA"/>
</dbReference>
<dbReference type="SMR" id="A7H653"/>
<dbReference type="KEGG" id="cjd:JJD26997_2078"/>
<dbReference type="HOGENOM" id="CLU_036235_2_1_7"/>
<dbReference type="Proteomes" id="UP000002302">
    <property type="component" value="Chromosome"/>
</dbReference>
<dbReference type="GO" id="GO:0015934">
    <property type="term" value="C:large ribosomal subunit"/>
    <property type="evidence" value="ECO:0007669"/>
    <property type="project" value="InterPro"/>
</dbReference>
<dbReference type="GO" id="GO:0019843">
    <property type="term" value="F:rRNA binding"/>
    <property type="evidence" value="ECO:0007669"/>
    <property type="project" value="UniProtKB-UniRule"/>
</dbReference>
<dbReference type="GO" id="GO:0003735">
    <property type="term" value="F:structural constituent of ribosome"/>
    <property type="evidence" value="ECO:0007669"/>
    <property type="project" value="InterPro"/>
</dbReference>
<dbReference type="GO" id="GO:0016740">
    <property type="term" value="F:transferase activity"/>
    <property type="evidence" value="ECO:0007669"/>
    <property type="project" value="InterPro"/>
</dbReference>
<dbReference type="GO" id="GO:0002181">
    <property type="term" value="P:cytoplasmic translation"/>
    <property type="evidence" value="ECO:0007669"/>
    <property type="project" value="TreeGrafter"/>
</dbReference>
<dbReference type="FunFam" id="2.30.30.30:FF:000001">
    <property type="entry name" value="50S ribosomal protein L2"/>
    <property type="match status" value="1"/>
</dbReference>
<dbReference type="FunFam" id="2.40.50.140:FF:000003">
    <property type="entry name" value="50S ribosomal protein L2"/>
    <property type="match status" value="1"/>
</dbReference>
<dbReference type="FunFam" id="4.10.950.10:FF:000001">
    <property type="entry name" value="50S ribosomal protein L2"/>
    <property type="match status" value="1"/>
</dbReference>
<dbReference type="Gene3D" id="2.30.30.30">
    <property type="match status" value="1"/>
</dbReference>
<dbReference type="Gene3D" id="2.40.50.140">
    <property type="entry name" value="Nucleic acid-binding proteins"/>
    <property type="match status" value="1"/>
</dbReference>
<dbReference type="Gene3D" id="4.10.950.10">
    <property type="entry name" value="Ribosomal protein L2, domain 3"/>
    <property type="match status" value="1"/>
</dbReference>
<dbReference type="HAMAP" id="MF_01320_B">
    <property type="entry name" value="Ribosomal_uL2_B"/>
    <property type="match status" value="1"/>
</dbReference>
<dbReference type="InterPro" id="IPR012340">
    <property type="entry name" value="NA-bd_OB-fold"/>
</dbReference>
<dbReference type="InterPro" id="IPR014722">
    <property type="entry name" value="Rib_uL2_dom2"/>
</dbReference>
<dbReference type="InterPro" id="IPR002171">
    <property type="entry name" value="Ribosomal_uL2"/>
</dbReference>
<dbReference type="InterPro" id="IPR005880">
    <property type="entry name" value="Ribosomal_uL2_bac/org-type"/>
</dbReference>
<dbReference type="InterPro" id="IPR022669">
    <property type="entry name" value="Ribosomal_uL2_C"/>
</dbReference>
<dbReference type="InterPro" id="IPR022671">
    <property type="entry name" value="Ribosomal_uL2_CS"/>
</dbReference>
<dbReference type="InterPro" id="IPR014726">
    <property type="entry name" value="Ribosomal_uL2_dom3"/>
</dbReference>
<dbReference type="InterPro" id="IPR022666">
    <property type="entry name" value="Ribosomal_uL2_RNA-bd_dom"/>
</dbReference>
<dbReference type="InterPro" id="IPR008991">
    <property type="entry name" value="Translation_prot_SH3-like_sf"/>
</dbReference>
<dbReference type="NCBIfam" id="TIGR01171">
    <property type="entry name" value="rplB_bact"/>
    <property type="match status" value="1"/>
</dbReference>
<dbReference type="PANTHER" id="PTHR13691:SF5">
    <property type="entry name" value="LARGE RIBOSOMAL SUBUNIT PROTEIN UL2M"/>
    <property type="match status" value="1"/>
</dbReference>
<dbReference type="PANTHER" id="PTHR13691">
    <property type="entry name" value="RIBOSOMAL PROTEIN L2"/>
    <property type="match status" value="1"/>
</dbReference>
<dbReference type="Pfam" id="PF00181">
    <property type="entry name" value="Ribosomal_L2"/>
    <property type="match status" value="1"/>
</dbReference>
<dbReference type="Pfam" id="PF03947">
    <property type="entry name" value="Ribosomal_L2_C"/>
    <property type="match status" value="1"/>
</dbReference>
<dbReference type="PIRSF" id="PIRSF002158">
    <property type="entry name" value="Ribosomal_L2"/>
    <property type="match status" value="1"/>
</dbReference>
<dbReference type="SMART" id="SM01383">
    <property type="entry name" value="Ribosomal_L2"/>
    <property type="match status" value="1"/>
</dbReference>
<dbReference type="SMART" id="SM01382">
    <property type="entry name" value="Ribosomal_L2_C"/>
    <property type="match status" value="1"/>
</dbReference>
<dbReference type="SUPFAM" id="SSF50249">
    <property type="entry name" value="Nucleic acid-binding proteins"/>
    <property type="match status" value="1"/>
</dbReference>
<dbReference type="SUPFAM" id="SSF50104">
    <property type="entry name" value="Translation proteins SH3-like domain"/>
    <property type="match status" value="1"/>
</dbReference>
<dbReference type="PROSITE" id="PS00467">
    <property type="entry name" value="RIBOSOMAL_L2"/>
    <property type="match status" value="1"/>
</dbReference>
<keyword id="KW-0687">Ribonucleoprotein</keyword>
<keyword id="KW-0689">Ribosomal protein</keyword>
<keyword id="KW-0694">RNA-binding</keyword>
<keyword id="KW-0699">rRNA-binding</keyword>
<feature type="chain" id="PRO_1000051934" description="Large ribosomal subunit protein uL2">
    <location>
        <begin position="1"/>
        <end position="276"/>
    </location>
</feature>
<feature type="region of interest" description="Disordered" evidence="2">
    <location>
        <begin position="211"/>
        <end position="276"/>
    </location>
</feature>
<feature type="compositionally biased region" description="Basic and acidic residues" evidence="2">
    <location>
        <begin position="230"/>
        <end position="240"/>
    </location>
</feature>
<name>RL2_CAMJD</name>
<evidence type="ECO:0000255" key="1">
    <source>
        <dbReference type="HAMAP-Rule" id="MF_01320"/>
    </source>
</evidence>
<evidence type="ECO:0000256" key="2">
    <source>
        <dbReference type="SAM" id="MobiDB-lite"/>
    </source>
</evidence>
<evidence type="ECO:0000305" key="3"/>
<sequence>MAIKTYKPYTPSRRYITGLSSEDITAKPSVRSLLVKLPAHAGRNSYGRITSRHKEAGAKKLYRIIDFKRRKFGIEGKVEAIEYDPYRNCRIALIAYKDGEKRYILQPRGLSVGDIVAAAESGLDIKPGNAMKLKNIPVGTIVHNVELKPGKGGQMIRSAGAYAQLMGKEEKYVILRLASGEMRQVLAECMASIGEVGNEEWANITIGKAGRNRHRGIRPQTRGSAMNPVDHPHGGGEGKKNSGRHPVTPWGKPTKGAKTRCKKASDKLIISRRKGK</sequence>